<evidence type="ECO:0000250" key="1"/>
<evidence type="ECO:0000255" key="2"/>
<evidence type="ECO:0000305" key="3"/>
<keyword id="KW-1015">Disulfide bond</keyword>
<keyword id="KW-0964">Secreted</keyword>
<keyword id="KW-0732">Signal</keyword>
<reference key="1">
    <citation type="journal article" date="2010" name="BMC Genomics">
        <title>Comparative venom gland transcriptome analysis of the scorpion Lychas mucronatus reveals intraspecific toxic gene diversity and new venomous components.</title>
        <authorList>
            <person name="Zhao R."/>
            <person name="Ma Y."/>
            <person name="He Y."/>
            <person name="Di Z."/>
            <person name="Wu Y.-L."/>
            <person name="Cao Z.-J."/>
            <person name="Li W.-X."/>
        </authorList>
    </citation>
    <scope>NUCLEOTIDE SEQUENCE [MRNA]</scope>
    <source>
        <strain>Yunnan</strain>
        <tissue>Venom gland</tissue>
    </source>
</reference>
<sequence length="123" mass="14099">MNKLFLFTLLVTLWSVKGFTYEEKKQAFCSLPKVYQIRLLDCLIDRGSENDKEVVNAVYKCMNEHSDVDGKADAMMKAVCNEEIFATNRNLILCMLVNPPKLEHSERTNDDDLEAVKYCLVNG</sequence>
<feature type="signal peptide" evidence="2">
    <location>
        <begin position="1"/>
        <end position="18"/>
    </location>
</feature>
<feature type="chain" id="PRO_0000403900" description="Venom protein 29">
    <location>
        <begin position="19"/>
        <end position="123"/>
    </location>
</feature>
<name>VP29_LYCMC</name>
<proteinExistence type="evidence at transcript level"/>
<organism>
    <name type="scientific">Lychas mucronatus</name>
    <name type="common">Chinese swimming scorpion</name>
    <dbReference type="NCBI Taxonomy" id="172552"/>
    <lineage>
        <taxon>Eukaryota</taxon>
        <taxon>Metazoa</taxon>
        <taxon>Ecdysozoa</taxon>
        <taxon>Arthropoda</taxon>
        <taxon>Chelicerata</taxon>
        <taxon>Arachnida</taxon>
        <taxon>Scorpiones</taxon>
        <taxon>Buthida</taxon>
        <taxon>Buthoidea</taxon>
        <taxon>Buthidae</taxon>
        <taxon>Lychas</taxon>
    </lineage>
</organism>
<accession>P0CJ08</accession>
<protein>
    <recommendedName>
        <fullName>Venom protein 29</fullName>
    </recommendedName>
</protein>
<dbReference type="EMBL" id="GT029029">
    <property type="status" value="NOT_ANNOTATED_CDS"/>
    <property type="molecule type" value="mRNA"/>
</dbReference>
<dbReference type="GO" id="GO:0005576">
    <property type="term" value="C:extracellular region"/>
    <property type="evidence" value="ECO:0007669"/>
    <property type="project" value="UniProtKB-SubCell"/>
</dbReference>
<comment type="subcellular location">
    <subcellularLocation>
        <location evidence="1">Secreted</location>
    </subcellularLocation>
</comment>
<comment type="tissue specificity">
    <text evidence="3">Expressed by the venom gland.</text>
</comment>
<comment type="PTM">
    <text evidence="1">Contains 3 disulfide bonds.</text>
</comment>